<protein>
    <recommendedName>
        <fullName evidence="1">Aspartate carbamoyltransferase catalytic subunit</fullName>
        <ecNumber evidence="1">2.1.3.2</ecNumber>
    </recommendedName>
    <alternativeName>
        <fullName evidence="1">Aspartate transcarbamylase</fullName>
        <shortName evidence="1">ATCase</shortName>
    </alternativeName>
</protein>
<organism>
    <name type="scientific">Brucella abortus (strain 2308)</name>
    <dbReference type="NCBI Taxonomy" id="359391"/>
    <lineage>
        <taxon>Bacteria</taxon>
        <taxon>Pseudomonadati</taxon>
        <taxon>Pseudomonadota</taxon>
        <taxon>Alphaproteobacteria</taxon>
        <taxon>Hyphomicrobiales</taxon>
        <taxon>Brucellaceae</taxon>
        <taxon>Brucella/Ochrobactrum group</taxon>
        <taxon>Brucella</taxon>
    </lineage>
</organism>
<name>PYRB_BRUA2</name>
<proteinExistence type="inferred from homology"/>
<evidence type="ECO:0000255" key="1">
    <source>
        <dbReference type="HAMAP-Rule" id="MF_00001"/>
    </source>
</evidence>
<keyword id="KW-0665">Pyrimidine biosynthesis</keyword>
<keyword id="KW-1185">Reference proteome</keyword>
<keyword id="KW-0808">Transferase</keyword>
<feature type="chain" id="PRO_0000301560" description="Aspartate carbamoyltransferase catalytic subunit">
    <location>
        <begin position="1"/>
        <end position="322"/>
    </location>
</feature>
<feature type="binding site" evidence="1">
    <location>
        <position position="65"/>
    </location>
    <ligand>
        <name>carbamoyl phosphate</name>
        <dbReference type="ChEBI" id="CHEBI:58228"/>
    </ligand>
</feature>
<feature type="binding site" evidence="1">
    <location>
        <position position="66"/>
    </location>
    <ligand>
        <name>carbamoyl phosphate</name>
        <dbReference type="ChEBI" id="CHEBI:58228"/>
    </ligand>
</feature>
<feature type="binding site" evidence="1">
    <location>
        <position position="93"/>
    </location>
    <ligand>
        <name>L-aspartate</name>
        <dbReference type="ChEBI" id="CHEBI:29991"/>
    </ligand>
</feature>
<feature type="binding site" evidence="1">
    <location>
        <position position="115"/>
    </location>
    <ligand>
        <name>carbamoyl phosphate</name>
        <dbReference type="ChEBI" id="CHEBI:58228"/>
    </ligand>
</feature>
<feature type="binding site" evidence="1">
    <location>
        <position position="143"/>
    </location>
    <ligand>
        <name>carbamoyl phosphate</name>
        <dbReference type="ChEBI" id="CHEBI:58228"/>
    </ligand>
</feature>
<feature type="binding site" evidence="1">
    <location>
        <position position="146"/>
    </location>
    <ligand>
        <name>carbamoyl phosphate</name>
        <dbReference type="ChEBI" id="CHEBI:58228"/>
    </ligand>
</feature>
<feature type="binding site" evidence="1">
    <location>
        <position position="176"/>
    </location>
    <ligand>
        <name>L-aspartate</name>
        <dbReference type="ChEBI" id="CHEBI:29991"/>
    </ligand>
</feature>
<feature type="binding site" evidence="1">
    <location>
        <position position="230"/>
    </location>
    <ligand>
        <name>L-aspartate</name>
        <dbReference type="ChEBI" id="CHEBI:29991"/>
    </ligand>
</feature>
<feature type="binding site" evidence="1">
    <location>
        <position position="271"/>
    </location>
    <ligand>
        <name>carbamoyl phosphate</name>
        <dbReference type="ChEBI" id="CHEBI:58228"/>
    </ligand>
</feature>
<feature type="binding site" evidence="1">
    <location>
        <position position="272"/>
    </location>
    <ligand>
        <name>carbamoyl phosphate</name>
        <dbReference type="ChEBI" id="CHEBI:58228"/>
    </ligand>
</feature>
<dbReference type="EC" id="2.1.3.2" evidence="1"/>
<dbReference type="EMBL" id="AM040265">
    <property type="protein sequence ID" value="CAJ12807.1"/>
    <property type="molecule type" value="Genomic_DNA"/>
</dbReference>
<dbReference type="RefSeq" id="WP_002966034.1">
    <property type="nucleotide sequence ID" value="NZ_KN046823.1"/>
</dbReference>
<dbReference type="SMR" id="Q2YKL8"/>
<dbReference type="STRING" id="359391.BAB2_0641"/>
<dbReference type="KEGG" id="bmf:BAB2_0641"/>
<dbReference type="PATRIC" id="fig|359391.11.peg.2822"/>
<dbReference type="HOGENOM" id="CLU_043846_2_0_5"/>
<dbReference type="PhylomeDB" id="Q2YKL8"/>
<dbReference type="UniPathway" id="UPA00070">
    <property type="reaction ID" value="UER00116"/>
</dbReference>
<dbReference type="PRO" id="PR:Q2YKL8"/>
<dbReference type="Proteomes" id="UP000002719">
    <property type="component" value="Chromosome II"/>
</dbReference>
<dbReference type="GO" id="GO:0005829">
    <property type="term" value="C:cytosol"/>
    <property type="evidence" value="ECO:0007669"/>
    <property type="project" value="TreeGrafter"/>
</dbReference>
<dbReference type="GO" id="GO:0016597">
    <property type="term" value="F:amino acid binding"/>
    <property type="evidence" value="ECO:0007669"/>
    <property type="project" value="InterPro"/>
</dbReference>
<dbReference type="GO" id="GO:0004070">
    <property type="term" value="F:aspartate carbamoyltransferase activity"/>
    <property type="evidence" value="ECO:0007669"/>
    <property type="project" value="UniProtKB-UniRule"/>
</dbReference>
<dbReference type="GO" id="GO:0006207">
    <property type="term" value="P:'de novo' pyrimidine nucleobase biosynthetic process"/>
    <property type="evidence" value="ECO:0007669"/>
    <property type="project" value="InterPro"/>
</dbReference>
<dbReference type="GO" id="GO:0044205">
    <property type="term" value="P:'de novo' UMP biosynthetic process"/>
    <property type="evidence" value="ECO:0007669"/>
    <property type="project" value="UniProtKB-UniRule"/>
</dbReference>
<dbReference type="GO" id="GO:0006520">
    <property type="term" value="P:amino acid metabolic process"/>
    <property type="evidence" value="ECO:0007669"/>
    <property type="project" value="InterPro"/>
</dbReference>
<dbReference type="FunFam" id="3.40.50.1370:FF:000007">
    <property type="entry name" value="Aspartate carbamoyltransferase"/>
    <property type="match status" value="1"/>
</dbReference>
<dbReference type="Gene3D" id="3.40.50.1370">
    <property type="entry name" value="Aspartate/ornithine carbamoyltransferase"/>
    <property type="match status" value="2"/>
</dbReference>
<dbReference type="HAMAP" id="MF_00001">
    <property type="entry name" value="Asp_carb_tr"/>
    <property type="match status" value="1"/>
</dbReference>
<dbReference type="InterPro" id="IPR006132">
    <property type="entry name" value="Asp/Orn_carbamoyltranf_P-bd"/>
</dbReference>
<dbReference type="InterPro" id="IPR006130">
    <property type="entry name" value="Asp/Orn_carbamoylTrfase"/>
</dbReference>
<dbReference type="InterPro" id="IPR036901">
    <property type="entry name" value="Asp/Orn_carbamoylTrfase_sf"/>
</dbReference>
<dbReference type="InterPro" id="IPR002082">
    <property type="entry name" value="Asp_carbamoyltransf"/>
</dbReference>
<dbReference type="InterPro" id="IPR006131">
    <property type="entry name" value="Asp_carbamoyltransf_Asp/Orn-bd"/>
</dbReference>
<dbReference type="NCBIfam" id="TIGR00670">
    <property type="entry name" value="asp_carb_tr"/>
    <property type="match status" value="1"/>
</dbReference>
<dbReference type="NCBIfam" id="NF002032">
    <property type="entry name" value="PRK00856.1"/>
    <property type="match status" value="1"/>
</dbReference>
<dbReference type="PANTHER" id="PTHR45753:SF6">
    <property type="entry name" value="ASPARTATE CARBAMOYLTRANSFERASE"/>
    <property type="match status" value="1"/>
</dbReference>
<dbReference type="PANTHER" id="PTHR45753">
    <property type="entry name" value="ORNITHINE CARBAMOYLTRANSFERASE, MITOCHONDRIAL"/>
    <property type="match status" value="1"/>
</dbReference>
<dbReference type="Pfam" id="PF00185">
    <property type="entry name" value="OTCace"/>
    <property type="match status" value="1"/>
</dbReference>
<dbReference type="Pfam" id="PF02729">
    <property type="entry name" value="OTCace_N"/>
    <property type="match status" value="1"/>
</dbReference>
<dbReference type="PRINTS" id="PR00100">
    <property type="entry name" value="AOTCASE"/>
</dbReference>
<dbReference type="PRINTS" id="PR00101">
    <property type="entry name" value="ATCASE"/>
</dbReference>
<dbReference type="SUPFAM" id="SSF53671">
    <property type="entry name" value="Aspartate/ornithine carbamoyltransferase"/>
    <property type="match status" value="1"/>
</dbReference>
<dbReference type="PROSITE" id="PS00097">
    <property type="entry name" value="CARBAMOYLTRANSFERASE"/>
    <property type="match status" value="1"/>
</dbReference>
<accession>Q2YKL8</accession>
<comment type="function">
    <text evidence="1">Catalyzes the condensation of carbamoyl phosphate and aspartate to form carbamoyl aspartate and inorganic phosphate, the committed step in the de novo pyrimidine nucleotide biosynthesis pathway.</text>
</comment>
<comment type="catalytic activity">
    <reaction evidence="1">
        <text>carbamoyl phosphate + L-aspartate = N-carbamoyl-L-aspartate + phosphate + H(+)</text>
        <dbReference type="Rhea" id="RHEA:20013"/>
        <dbReference type="ChEBI" id="CHEBI:15378"/>
        <dbReference type="ChEBI" id="CHEBI:29991"/>
        <dbReference type="ChEBI" id="CHEBI:32814"/>
        <dbReference type="ChEBI" id="CHEBI:43474"/>
        <dbReference type="ChEBI" id="CHEBI:58228"/>
        <dbReference type="EC" id="2.1.3.2"/>
    </reaction>
</comment>
<comment type="pathway">
    <text evidence="1">Pyrimidine metabolism; UMP biosynthesis via de novo pathway; (S)-dihydroorotate from bicarbonate: step 2/3.</text>
</comment>
<comment type="subunit">
    <text evidence="1">Heterododecamer (2C3:3R2) of six catalytic PyrB chains organized as two trimers (C3), and six regulatory PyrI chains organized as three dimers (R2).</text>
</comment>
<comment type="similarity">
    <text evidence="1">Belongs to the aspartate/ornithine carbamoyltransferase superfamily. ATCase family.</text>
</comment>
<reference key="1">
    <citation type="journal article" date="2005" name="Infect. Immun.">
        <title>Whole-genome analyses of speciation events in pathogenic Brucellae.</title>
        <authorList>
            <person name="Chain P.S."/>
            <person name="Comerci D.J."/>
            <person name="Tolmasky M.E."/>
            <person name="Larimer F.W."/>
            <person name="Malfatti S.A."/>
            <person name="Vergez L.M."/>
            <person name="Aguero F."/>
            <person name="Land M.L."/>
            <person name="Ugalde R.A."/>
            <person name="Garcia E."/>
        </authorList>
    </citation>
    <scope>NUCLEOTIDE SEQUENCE [LARGE SCALE GENOMIC DNA]</scope>
    <source>
        <strain>2308</strain>
    </source>
</reference>
<sequence length="322" mass="34802">MTNQTVSPLFPHRHLLGIKGLSPLDILCLLDLADQEIAVSRQPEKKKSVLRGRTQINLFFEASTRTQSSFELAGKRLGADVMNMSVGNSSVKKGETLIDTAMTLNAMQPDILVIRHASAGAAALLAQKVGCSVVNAGDGAHEHPTQALLDALTIRRAKGQIENLIVAICGDVLHSRVARSNILLLNALGARVRVVAPSTLLPAGMADMSVEVFNSMEEGLKDADVVMMLRLQRERMAGSFVPSVREYFHFYGLDREKLKFAKPDALVMHPGPMNRGVEIASDVADGPQSVIQQQVEMGVAVRMAVMEALLDPRRNPGNGEPA</sequence>
<gene>
    <name evidence="1" type="primary">pyrB</name>
    <name type="ordered locus">BAB2_0641</name>
</gene>